<sequence length="306" mass="33448">MPELPEVETVKRGLAPTMEGALLVRAELRRPDLRFPFPENFEDAVAGRRIVALSRRAKYLTIELEGGDVIIAHLGMSGSFRIEFDGPGEGRIKESADPAVPGDFHRPRSKDEKHDHVVFHLDASCGPARVIYNDPRRFGFMALARREALAEHVFLRGLGEEPTGNALDAAYLAARFSGKAQPLKAALLDQRTIAGLGNIYVCEALWRSGLSPKRAAGTLVDKRARPKQALVQLTDAIRAVIADAIAAGGSSLKDHIQADGSLGYFQHSFSVYDREGEACRTSGCRGTVERIVQAGRSTFYCPHCQK</sequence>
<accession>A6UFF8</accession>
<feature type="initiator methionine" description="Removed" evidence="1">
    <location>
        <position position="1"/>
    </location>
</feature>
<feature type="chain" id="PRO_1000008780" description="Formamidopyrimidine-DNA glycosylase">
    <location>
        <begin position="2"/>
        <end position="306"/>
    </location>
</feature>
<feature type="zinc finger region" description="FPG-type" evidence="2">
    <location>
        <begin position="270"/>
        <end position="306"/>
    </location>
</feature>
<feature type="active site" description="Schiff-base intermediate with DNA" evidence="2">
    <location>
        <position position="2"/>
    </location>
</feature>
<feature type="active site" description="Proton donor" evidence="2">
    <location>
        <position position="3"/>
    </location>
</feature>
<feature type="active site" description="Proton donor; for beta-elimination activity" evidence="2">
    <location>
        <position position="58"/>
    </location>
</feature>
<feature type="active site" description="Proton donor; for delta-elimination activity" evidence="2">
    <location>
        <position position="296"/>
    </location>
</feature>
<feature type="binding site" evidence="2">
    <location>
        <position position="114"/>
    </location>
    <ligand>
        <name>DNA</name>
        <dbReference type="ChEBI" id="CHEBI:16991"/>
    </ligand>
</feature>
<feature type="binding site" evidence="2">
    <location>
        <position position="136"/>
    </location>
    <ligand>
        <name>DNA</name>
        <dbReference type="ChEBI" id="CHEBI:16991"/>
    </ligand>
</feature>
<feature type="binding site" evidence="2">
    <location>
        <position position="179"/>
    </location>
    <ligand>
        <name>DNA</name>
        <dbReference type="ChEBI" id="CHEBI:16991"/>
    </ligand>
</feature>
<organism>
    <name type="scientific">Sinorhizobium medicae (strain WSM419)</name>
    <name type="common">Ensifer medicae</name>
    <dbReference type="NCBI Taxonomy" id="366394"/>
    <lineage>
        <taxon>Bacteria</taxon>
        <taxon>Pseudomonadati</taxon>
        <taxon>Pseudomonadota</taxon>
        <taxon>Alphaproteobacteria</taxon>
        <taxon>Hyphomicrobiales</taxon>
        <taxon>Rhizobiaceae</taxon>
        <taxon>Sinorhizobium/Ensifer group</taxon>
        <taxon>Sinorhizobium</taxon>
    </lineage>
</organism>
<evidence type="ECO:0000250" key="1"/>
<evidence type="ECO:0000255" key="2">
    <source>
        <dbReference type="HAMAP-Rule" id="MF_00103"/>
    </source>
</evidence>
<dbReference type="EC" id="3.2.2.23" evidence="2"/>
<dbReference type="EC" id="4.2.99.18" evidence="2"/>
<dbReference type="EMBL" id="CP000738">
    <property type="protein sequence ID" value="ABR62388.1"/>
    <property type="molecule type" value="Genomic_DNA"/>
</dbReference>
<dbReference type="RefSeq" id="WP_012067767.1">
    <property type="nucleotide sequence ID" value="NC_009636.1"/>
</dbReference>
<dbReference type="RefSeq" id="YP_001329223.1">
    <property type="nucleotide sequence ID" value="NC_009636.1"/>
</dbReference>
<dbReference type="SMR" id="A6UFF8"/>
<dbReference type="STRING" id="366394.Smed_3573"/>
<dbReference type="GeneID" id="61611127"/>
<dbReference type="KEGG" id="smd:Smed_3573"/>
<dbReference type="PATRIC" id="fig|366394.8.peg.6828"/>
<dbReference type="eggNOG" id="COG0266">
    <property type="taxonomic scope" value="Bacteria"/>
</dbReference>
<dbReference type="HOGENOM" id="CLU_038423_1_1_5"/>
<dbReference type="OrthoDB" id="9800855at2"/>
<dbReference type="Proteomes" id="UP000001108">
    <property type="component" value="Chromosome"/>
</dbReference>
<dbReference type="GO" id="GO:0034039">
    <property type="term" value="F:8-oxo-7,8-dihydroguanine DNA N-glycosylase activity"/>
    <property type="evidence" value="ECO:0007669"/>
    <property type="project" value="TreeGrafter"/>
</dbReference>
<dbReference type="GO" id="GO:0140078">
    <property type="term" value="F:class I DNA-(apurinic or apyrimidinic site) endonuclease activity"/>
    <property type="evidence" value="ECO:0007669"/>
    <property type="project" value="UniProtKB-EC"/>
</dbReference>
<dbReference type="GO" id="GO:0003684">
    <property type="term" value="F:damaged DNA binding"/>
    <property type="evidence" value="ECO:0007669"/>
    <property type="project" value="InterPro"/>
</dbReference>
<dbReference type="GO" id="GO:0008270">
    <property type="term" value="F:zinc ion binding"/>
    <property type="evidence" value="ECO:0007669"/>
    <property type="project" value="UniProtKB-UniRule"/>
</dbReference>
<dbReference type="GO" id="GO:0006284">
    <property type="term" value="P:base-excision repair"/>
    <property type="evidence" value="ECO:0007669"/>
    <property type="project" value="InterPro"/>
</dbReference>
<dbReference type="CDD" id="cd08966">
    <property type="entry name" value="EcFpg-like_N"/>
    <property type="match status" value="1"/>
</dbReference>
<dbReference type="FunFam" id="1.10.8.50:FF:000003">
    <property type="entry name" value="Formamidopyrimidine-DNA glycosylase"/>
    <property type="match status" value="1"/>
</dbReference>
<dbReference type="Gene3D" id="1.10.8.50">
    <property type="match status" value="1"/>
</dbReference>
<dbReference type="Gene3D" id="3.20.190.10">
    <property type="entry name" value="MutM-like, N-terminal"/>
    <property type="match status" value="1"/>
</dbReference>
<dbReference type="HAMAP" id="MF_00103">
    <property type="entry name" value="Fapy_DNA_glycosyl"/>
    <property type="match status" value="1"/>
</dbReference>
<dbReference type="InterPro" id="IPR015886">
    <property type="entry name" value="DNA_glyclase/AP_lyase_DNA-bd"/>
</dbReference>
<dbReference type="InterPro" id="IPR020629">
    <property type="entry name" value="Formamido-pyr_DNA_Glyclase"/>
</dbReference>
<dbReference type="InterPro" id="IPR012319">
    <property type="entry name" value="FPG_cat"/>
</dbReference>
<dbReference type="InterPro" id="IPR035937">
    <property type="entry name" value="MutM-like_N-ter"/>
</dbReference>
<dbReference type="InterPro" id="IPR010979">
    <property type="entry name" value="Ribosomal_uS13-like_H2TH"/>
</dbReference>
<dbReference type="InterPro" id="IPR000214">
    <property type="entry name" value="Znf_DNA_glyclase/AP_lyase"/>
</dbReference>
<dbReference type="InterPro" id="IPR010663">
    <property type="entry name" value="Znf_FPG/IleRS"/>
</dbReference>
<dbReference type="NCBIfam" id="NF002211">
    <property type="entry name" value="PRK01103.1"/>
    <property type="match status" value="1"/>
</dbReference>
<dbReference type="PANTHER" id="PTHR22993">
    <property type="entry name" value="FORMAMIDOPYRIMIDINE-DNA GLYCOSYLASE"/>
    <property type="match status" value="1"/>
</dbReference>
<dbReference type="PANTHER" id="PTHR22993:SF9">
    <property type="entry name" value="FORMAMIDOPYRIMIDINE-DNA GLYCOSYLASE"/>
    <property type="match status" value="1"/>
</dbReference>
<dbReference type="Pfam" id="PF01149">
    <property type="entry name" value="Fapy_DNA_glyco"/>
    <property type="match status" value="1"/>
</dbReference>
<dbReference type="Pfam" id="PF06831">
    <property type="entry name" value="H2TH"/>
    <property type="match status" value="1"/>
</dbReference>
<dbReference type="Pfam" id="PF06827">
    <property type="entry name" value="zf-FPG_IleRS"/>
    <property type="match status" value="1"/>
</dbReference>
<dbReference type="SMART" id="SM00898">
    <property type="entry name" value="Fapy_DNA_glyco"/>
    <property type="match status" value="1"/>
</dbReference>
<dbReference type="SMART" id="SM01232">
    <property type="entry name" value="H2TH"/>
    <property type="match status" value="1"/>
</dbReference>
<dbReference type="SUPFAM" id="SSF57716">
    <property type="entry name" value="Glucocorticoid receptor-like (DNA-binding domain)"/>
    <property type="match status" value="1"/>
</dbReference>
<dbReference type="SUPFAM" id="SSF81624">
    <property type="entry name" value="N-terminal domain of MutM-like DNA repair proteins"/>
    <property type="match status" value="1"/>
</dbReference>
<dbReference type="SUPFAM" id="SSF46946">
    <property type="entry name" value="S13-like H2TH domain"/>
    <property type="match status" value="1"/>
</dbReference>
<dbReference type="PROSITE" id="PS51068">
    <property type="entry name" value="FPG_CAT"/>
    <property type="match status" value="1"/>
</dbReference>
<dbReference type="PROSITE" id="PS51066">
    <property type="entry name" value="ZF_FPG_2"/>
    <property type="match status" value="1"/>
</dbReference>
<protein>
    <recommendedName>
        <fullName evidence="2">Formamidopyrimidine-DNA glycosylase</fullName>
        <shortName evidence="2">Fapy-DNA glycosylase</shortName>
        <ecNumber evidence="2">3.2.2.23</ecNumber>
    </recommendedName>
    <alternativeName>
        <fullName evidence="2">DNA-(apurinic or apyrimidinic site) lyase MutM</fullName>
        <shortName evidence="2">AP lyase MutM</shortName>
        <ecNumber evidence="2">4.2.99.18</ecNumber>
    </alternativeName>
</protein>
<keyword id="KW-0227">DNA damage</keyword>
<keyword id="KW-0234">DNA repair</keyword>
<keyword id="KW-0238">DNA-binding</keyword>
<keyword id="KW-0326">Glycosidase</keyword>
<keyword id="KW-0378">Hydrolase</keyword>
<keyword id="KW-0456">Lyase</keyword>
<keyword id="KW-0479">Metal-binding</keyword>
<keyword id="KW-0511">Multifunctional enzyme</keyword>
<keyword id="KW-0862">Zinc</keyword>
<keyword id="KW-0863">Zinc-finger</keyword>
<comment type="function">
    <text evidence="2">Involved in base excision repair of DNA damaged by oxidation or by mutagenic agents. Acts as a DNA glycosylase that recognizes and removes damaged bases. Has a preference for oxidized purines, such as 7,8-dihydro-8-oxoguanine (8-oxoG). Has AP (apurinic/apyrimidinic) lyase activity and introduces nicks in the DNA strand. Cleaves the DNA backbone by beta-delta elimination to generate a single-strand break at the site of the removed base with both 3'- and 5'-phosphates.</text>
</comment>
<comment type="catalytic activity">
    <reaction evidence="2">
        <text>Hydrolysis of DNA containing ring-opened 7-methylguanine residues, releasing 2,6-diamino-4-hydroxy-5-(N-methyl)formamidopyrimidine.</text>
        <dbReference type="EC" id="3.2.2.23"/>
    </reaction>
</comment>
<comment type="catalytic activity">
    <reaction evidence="2">
        <text>2'-deoxyribonucleotide-(2'-deoxyribose 5'-phosphate)-2'-deoxyribonucleotide-DNA = a 3'-end 2'-deoxyribonucleotide-(2,3-dehydro-2,3-deoxyribose 5'-phosphate)-DNA + a 5'-end 5'-phospho-2'-deoxyribonucleoside-DNA + H(+)</text>
        <dbReference type="Rhea" id="RHEA:66592"/>
        <dbReference type="Rhea" id="RHEA-COMP:13180"/>
        <dbReference type="Rhea" id="RHEA-COMP:16897"/>
        <dbReference type="Rhea" id="RHEA-COMP:17067"/>
        <dbReference type="ChEBI" id="CHEBI:15378"/>
        <dbReference type="ChEBI" id="CHEBI:136412"/>
        <dbReference type="ChEBI" id="CHEBI:157695"/>
        <dbReference type="ChEBI" id="CHEBI:167181"/>
        <dbReference type="EC" id="4.2.99.18"/>
    </reaction>
</comment>
<comment type="cofactor">
    <cofactor evidence="2">
        <name>Zn(2+)</name>
        <dbReference type="ChEBI" id="CHEBI:29105"/>
    </cofactor>
    <text evidence="2">Binds 1 zinc ion per subunit.</text>
</comment>
<comment type="subunit">
    <text evidence="2">Monomer.</text>
</comment>
<comment type="similarity">
    <text evidence="2">Belongs to the FPG family.</text>
</comment>
<proteinExistence type="inferred from homology"/>
<reference key="1">
    <citation type="submission" date="2007-06" db="EMBL/GenBank/DDBJ databases">
        <title>Complete sequence of Sinorhizobium medicae WSM419 chromosome.</title>
        <authorList>
            <consortium name="US DOE Joint Genome Institute"/>
            <person name="Copeland A."/>
            <person name="Lucas S."/>
            <person name="Lapidus A."/>
            <person name="Barry K."/>
            <person name="Glavina del Rio T."/>
            <person name="Dalin E."/>
            <person name="Tice H."/>
            <person name="Pitluck S."/>
            <person name="Chain P."/>
            <person name="Malfatti S."/>
            <person name="Shin M."/>
            <person name="Vergez L."/>
            <person name="Schmutz J."/>
            <person name="Larimer F."/>
            <person name="Land M."/>
            <person name="Hauser L."/>
            <person name="Kyrpides N."/>
            <person name="Mikhailova N."/>
            <person name="Reeve W.G."/>
            <person name="Richardson P."/>
        </authorList>
    </citation>
    <scope>NUCLEOTIDE SEQUENCE [LARGE SCALE GENOMIC DNA]</scope>
    <source>
        <strain>WSM419</strain>
    </source>
</reference>
<gene>
    <name evidence="2" type="primary">mutM</name>
    <name evidence="2" type="synonym">fpg</name>
    <name type="ordered locus">Smed_3573</name>
</gene>
<name>FPG_SINMW</name>